<gene>
    <name type="primary">Tnfrsf17</name>
    <name type="synonym">Bcm</name>
    <name type="synonym">Bcma</name>
</gene>
<organism>
    <name type="scientific">Mus musculus</name>
    <name type="common">Mouse</name>
    <dbReference type="NCBI Taxonomy" id="10090"/>
    <lineage>
        <taxon>Eukaryota</taxon>
        <taxon>Metazoa</taxon>
        <taxon>Chordata</taxon>
        <taxon>Craniata</taxon>
        <taxon>Vertebrata</taxon>
        <taxon>Euteleostomi</taxon>
        <taxon>Mammalia</taxon>
        <taxon>Eutheria</taxon>
        <taxon>Euarchontoglires</taxon>
        <taxon>Glires</taxon>
        <taxon>Rodentia</taxon>
        <taxon>Myomorpha</taxon>
        <taxon>Muroidea</taxon>
        <taxon>Muridae</taxon>
        <taxon>Murinae</taxon>
        <taxon>Mus</taxon>
        <taxon>Mus</taxon>
    </lineage>
</organism>
<reference key="1">
    <citation type="journal article" date="1998" name="Int. Immunol.">
        <title>The characterization of murine BCMA gene defines it as a new member of the tumor necrosis factor receptor superfamily.</title>
        <authorList>
            <person name="Madry C."/>
            <person name="Laabi Y."/>
            <person name="Callebaut I."/>
            <person name="Roussel J."/>
            <person name="Hatzoglou A."/>
            <person name="Le Coniat M."/>
            <person name="Mornon J.-P."/>
            <person name="Berger R."/>
            <person name="Tsapis A."/>
        </authorList>
    </citation>
    <scope>NUCLEOTIDE SEQUENCE [MRNA] (ISOFORMS 1 AND 2)</scope>
    <source>
        <strain>BALB/cJ</strain>
        <tissue>Spleen</tissue>
    </source>
</reference>
<reference key="2">
    <citation type="journal article" date="2005" name="Science">
        <title>The transcriptional landscape of the mammalian genome.</title>
        <authorList>
            <person name="Carninci P."/>
            <person name="Kasukawa T."/>
            <person name="Katayama S."/>
            <person name="Gough J."/>
            <person name="Frith M.C."/>
            <person name="Maeda N."/>
            <person name="Oyama R."/>
            <person name="Ravasi T."/>
            <person name="Lenhard B."/>
            <person name="Wells C."/>
            <person name="Kodzius R."/>
            <person name="Shimokawa K."/>
            <person name="Bajic V.B."/>
            <person name="Brenner S.E."/>
            <person name="Batalov S."/>
            <person name="Forrest A.R."/>
            <person name="Zavolan M."/>
            <person name="Davis M.J."/>
            <person name="Wilming L.G."/>
            <person name="Aidinis V."/>
            <person name="Allen J.E."/>
            <person name="Ambesi-Impiombato A."/>
            <person name="Apweiler R."/>
            <person name="Aturaliya R.N."/>
            <person name="Bailey T.L."/>
            <person name="Bansal M."/>
            <person name="Baxter L."/>
            <person name="Beisel K.W."/>
            <person name="Bersano T."/>
            <person name="Bono H."/>
            <person name="Chalk A.M."/>
            <person name="Chiu K.P."/>
            <person name="Choudhary V."/>
            <person name="Christoffels A."/>
            <person name="Clutterbuck D.R."/>
            <person name="Crowe M.L."/>
            <person name="Dalla E."/>
            <person name="Dalrymple B.P."/>
            <person name="de Bono B."/>
            <person name="Della Gatta G."/>
            <person name="di Bernardo D."/>
            <person name="Down T."/>
            <person name="Engstrom P."/>
            <person name="Fagiolini M."/>
            <person name="Faulkner G."/>
            <person name="Fletcher C.F."/>
            <person name="Fukushima T."/>
            <person name="Furuno M."/>
            <person name="Futaki S."/>
            <person name="Gariboldi M."/>
            <person name="Georgii-Hemming P."/>
            <person name="Gingeras T.R."/>
            <person name="Gojobori T."/>
            <person name="Green R.E."/>
            <person name="Gustincich S."/>
            <person name="Harbers M."/>
            <person name="Hayashi Y."/>
            <person name="Hensch T.K."/>
            <person name="Hirokawa N."/>
            <person name="Hill D."/>
            <person name="Huminiecki L."/>
            <person name="Iacono M."/>
            <person name="Ikeo K."/>
            <person name="Iwama A."/>
            <person name="Ishikawa T."/>
            <person name="Jakt M."/>
            <person name="Kanapin A."/>
            <person name="Katoh M."/>
            <person name="Kawasawa Y."/>
            <person name="Kelso J."/>
            <person name="Kitamura H."/>
            <person name="Kitano H."/>
            <person name="Kollias G."/>
            <person name="Krishnan S.P."/>
            <person name="Kruger A."/>
            <person name="Kummerfeld S.K."/>
            <person name="Kurochkin I.V."/>
            <person name="Lareau L.F."/>
            <person name="Lazarevic D."/>
            <person name="Lipovich L."/>
            <person name="Liu J."/>
            <person name="Liuni S."/>
            <person name="McWilliam S."/>
            <person name="Madan Babu M."/>
            <person name="Madera M."/>
            <person name="Marchionni L."/>
            <person name="Matsuda H."/>
            <person name="Matsuzawa S."/>
            <person name="Miki H."/>
            <person name="Mignone F."/>
            <person name="Miyake S."/>
            <person name="Morris K."/>
            <person name="Mottagui-Tabar S."/>
            <person name="Mulder N."/>
            <person name="Nakano N."/>
            <person name="Nakauchi H."/>
            <person name="Ng P."/>
            <person name="Nilsson R."/>
            <person name="Nishiguchi S."/>
            <person name="Nishikawa S."/>
            <person name="Nori F."/>
            <person name="Ohara O."/>
            <person name="Okazaki Y."/>
            <person name="Orlando V."/>
            <person name="Pang K.C."/>
            <person name="Pavan W.J."/>
            <person name="Pavesi G."/>
            <person name="Pesole G."/>
            <person name="Petrovsky N."/>
            <person name="Piazza S."/>
            <person name="Reed J."/>
            <person name="Reid J.F."/>
            <person name="Ring B.Z."/>
            <person name="Ringwald M."/>
            <person name="Rost B."/>
            <person name="Ruan Y."/>
            <person name="Salzberg S.L."/>
            <person name="Sandelin A."/>
            <person name="Schneider C."/>
            <person name="Schoenbach C."/>
            <person name="Sekiguchi K."/>
            <person name="Semple C.A."/>
            <person name="Seno S."/>
            <person name="Sessa L."/>
            <person name="Sheng Y."/>
            <person name="Shibata Y."/>
            <person name="Shimada H."/>
            <person name="Shimada K."/>
            <person name="Silva D."/>
            <person name="Sinclair B."/>
            <person name="Sperling S."/>
            <person name="Stupka E."/>
            <person name="Sugiura K."/>
            <person name="Sultana R."/>
            <person name="Takenaka Y."/>
            <person name="Taki K."/>
            <person name="Tammoja K."/>
            <person name="Tan S.L."/>
            <person name="Tang S."/>
            <person name="Taylor M.S."/>
            <person name="Tegner J."/>
            <person name="Teichmann S.A."/>
            <person name="Ueda H.R."/>
            <person name="van Nimwegen E."/>
            <person name="Verardo R."/>
            <person name="Wei C.L."/>
            <person name="Yagi K."/>
            <person name="Yamanishi H."/>
            <person name="Zabarovsky E."/>
            <person name="Zhu S."/>
            <person name="Zimmer A."/>
            <person name="Hide W."/>
            <person name="Bult C."/>
            <person name="Grimmond S.M."/>
            <person name="Teasdale R.D."/>
            <person name="Liu E.T."/>
            <person name="Brusic V."/>
            <person name="Quackenbush J."/>
            <person name="Wahlestedt C."/>
            <person name="Mattick J.S."/>
            <person name="Hume D.A."/>
            <person name="Kai C."/>
            <person name="Sasaki D."/>
            <person name="Tomaru Y."/>
            <person name="Fukuda S."/>
            <person name="Kanamori-Katayama M."/>
            <person name="Suzuki M."/>
            <person name="Aoki J."/>
            <person name="Arakawa T."/>
            <person name="Iida J."/>
            <person name="Imamura K."/>
            <person name="Itoh M."/>
            <person name="Kato T."/>
            <person name="Kawaji H."/>
            <person name="Kawagashira N."/>
            <person name="Kawashima T."/>
            <person name="Kojima M."/>
            <person name="Kondo S."/>
            <person name="Konno H."/>
            <person name="Nakano K."/>
            <person name="Ninomiya N."/>
            <person name="Nishio T."/>
            <person name="Okada M."/>
            <person name="Plessy C."/>
            <person name="Shibata K."/>
            <person name="Shiraki T."/>
            <person name="Suzuki S."/>
            <person name="Tagami M."/>
            <person name="Waki K."/>
            <person name="Watahiki A."/>
            <person name="Okamura-Oho Y."/>
            <person name="Suzuki H."/>
            <person name="Kawai J."/>
            <person name="Hayashizaki Y."/>
        </authorList>
    </citation>
    <scope>NUCLEOTIDE SEQUENCE [LARGE SCALE MRNA] (ISOFORM 1)</scope>
    <source>
        <strain>C57BL/6J</strain>
        <tissue>Colon</tissue>
    </source>
</reference>
<reference key="3">
    <citation type="journal article" date="2004" name="Genome Res.">
        <title>The status, quality, and expansion of the NIH full-length cDNA project: the Mammalian Gene Collection (MGC).</title>
        <authorList>
            <consortium name="The MGC Project Team"/>
        </authorList>
    </citation>
    <scope>NUCLEOTIDE SEQUENCE [LARGE SCALE MRNA] (ISOFORM 1)</scope>
    <source>
        <strain>C57BL/6J</strain>
        <tissue>Mammary gland</tissue>
    </source>
</reference>
<sequence length="185" mass="20442">MAQQCFHSEYFDSLLHACKPCHLRCSNPPATCQPYCDPSVTSSVKGTYTVLWIFLGLTLVLSLALFTISFLLRKMNPEALKDEPQSPGQLDGSAQLDKADTELTRIRAGDDRIFPRSLEYTVEECTCEDCVKSKPKGDSDHFFPLPAMEEGATILVTTKTGDYGKSSVPTALQSVMGMEKPTHTR</sequence>
<name>TNR17_MOUSE</name>
<evidence type="ECO:0000250" key="1"/>
<evidence type="ECO:0000255" key="2"/>
<evidence type="ECO:0000303" key="3">
    <source>
    </source>
</evidence>
<evidence type="ECO:0000305" key="4"/>
<keyword id="KW-1064">Adaptive immunity</keyword>
<keyword id="KW-0025">Alternative splicing</keyword>
<keyword id="KW-1015">Disulfide bond</keyword>
<keyword id="KW-0391">Immunity</keyword>
<keyword id="KW-0472">Membrane</keyword>
<keyword id="KW-0675">Receptor</keyword>
<keyword id="KW-1185">Reference proteome</keyword>
<keyword id="KW-0735">Signal-anchor</keyword>
<keyword id="KW-0812">Transmembrane</keyword>
<keyword id="KW-1133">Transmembrane helix</keyword>
<accession>O88472</accession>
<protein>
    <recommendedName>
        <fullName>Tumor necrosis factor receptor superfamily member 17</fullName>
    </recommendedName>
    <alternativeName>
        <fullName>B-cell maturation protein</fullName>
    </alternativeName>
    <cdAntigenName>CD269</cdAntigenName>
</protein>
<comment type="function">
    <text evidence="1">Receptor for TNFSF13B/BLyS/BAFF and TNFSF13/APRIL. Promotes B-cell survival and plays a role in the regulation of humoral immunity. Activates NF-kappa-B and JNK (By similarity).</text>
</comment>
<comment type="subunit">
    <text evidence="1">Associates with TRAF1, TRAF2, TRAF3, TRAF5 and TRAF6.</text>
</comment>
<comment type="subcellular location">
    <subcellularLocation>
        <location evidence="4">Membrane</location>
        <topology evidence="4">Single-pass type III membrane protein</topology>
    </subcellularLocation>
</comment>
<comment type="alternative products">
    <event type="alternative splicing"/>
    <isoform>
        <id>O88472-1</id>
        <name>1</name>
        <sequence type="displayed"/>
    </isoform>
    <isoform>
        <id>O88472-2</id>
        <name>2</name>
        <sequence type="described" ref="VSP_006507"/>
    </isoform>
</comment>
<comment type="tissue specificity">
    <text>Detected in spleen, thymus, bone marrow and heart, and at lower levels in kidney and lung.</text>
</comment>
<proteinExistence type="evidence at transcript level"/>
<feature type="chain" id="PRO_0000058936" description="Tumor necrosis factor receptor superfamily member 17">
    <location>
        <begin position="1"/>
        <end position="185"/>
    </location>
</feature>
<feature type="topological domain" description="Extracellular" evidence="2">
    <location>
        <begin position="1"/>
        <end position="49"/>
    </location>
</feature>
<feature type="transmembrane region" description="Helical; Signal-anchor for type III membrane protein" evidence="2">
    <location>
        <begin position="50"/>
        <end position="70"/>
    </location>
</feature>
<feature type="topological domain" description="Cytoplasmic" evidence="2">
    <location>
        <begin position="71"/>
        <end position="185"/>
    </location>
</feature>
<feature type="repeat" description="TNFR-Cys">
    <location>
        <begin position="4"/>
        <end position="36"/>
    </location>
</feature>
<feature type="disulfide bond" evidence="1">
    <location>
        <begin position="5"/>
        <end position="18"/>
    </location>
</feature>
<feature type="disulfide bond" evidence="1">
    <location>
        <begin position="21"/>
        <end position="32"/>
    </location>
</feature>
<feature type="disulfide bond" evidence="1">
    <location>
        <begin position="25"/>
        <end position="36"/>
    </location>
</feature>
<feature type="splice variant" id="VSP_006507" description="In isoform 2." evidence="3">
    <location>
        <begin position="87"/>
        <end position="91"/>
    </location>
</feature>
<dbReference type="EMBL" id="AF061505">
    <property type="protein sequence ID" value="AAC23799.1"/>
    <property type="molecule type" value="mRNA"/>
</dbReference>
<dbReference type="EMBL" id="AK020247">
    <property type="protein sequence ID" value="BAB32038.1"/>
    <property type="molecule type" value="mRNA"/>
</dbReference>
<dbReference type="EMBL" id="BC027519">
    <property type="protein sequence ID" value="AAH27519.1"/>
    <property type="molecule type" value="mRNA"/>
</dbReference>
<dbReference type="CCDS" id="CCDS27962.1">
    <molecule id="O88472-1"/>
</dbReference>
<dbReference type="RefSeq" id="NP_035738.1">
    <molecule id="O88472-1"/>
    <property type="nucleotide sequence ID" value="NM_011608.1"/>
</dbReference>
<dbReference type="SMR" id="O88472"/>
<dbReference type="BioGRID" id="204247">
    <property type="interactions" value="1"/>
</dbReference>
<dbReference type="FunCoup" id="O88472">
    <property type="interactions" value="347"/>
</dbReference>
<dbReference type="STRING" id="10090.ENSMUSP00000023140"/>
<dbReference type="ChEMBL" id="CHEMBL1250345"/>
<dbReference type="PhosphoSitePlus" id="O88472"/>
<dbReference type="SwissPalm" id="O88472"/>
<dbReference type="PaxDb" id="10090-ENSMUSP00000023140"/>
<dbReference type="Antibodypedia" id="11568">
    <property type="antibodies" value="1010 antibodies from 44 providers"/>
</dbReference>
<dbReference type="DNASU" id="21935"/>
<dbReference type="Ensembl" id="ENSMUST00000023140.6">
    <molecule id="O88472-1"/>
    <property type="protein sequence ID" value="ENSMUSP00000023140.6"/>
    <property type="gene ID" value="ENSMUSG00000022496.6"/>
</dbReference>
<dbReference type="GeneID" id="21935"/>
<dbReference type="KEGG" id="mmu:21935"/>
<dbReference type="UCSC" id="uc007yfh.1">
    <molecule id="O88472-1"/>
    <property type="organism name" value="mouse"/>
</dbReference>
<dbReference type="AGR" id="MGI:1343050"/>
<dbReference type="CTD" id="608"/>
<dbReference type="MGI" id="MGI:1343050">
    <property type="gene designation" value="Tnfrsf17"/>
</dbReference>
<dbReference type="VEuPathDB" id="HostDB:ENSMUSG00000022496"/>
<dbReference type="eggNOG" id="ENOG502SF2N">
    <property type="taxonomic scope" value="Eukaryota"/>
</dbReference>
<dbReference type="GeneTree" id="ENSGT00940000154485"/>
<dbReference type="HOGENOM" id="CLU_131588_0_0_1"/>
<dbReference type="InParanoid" id="O88472"/>
<dbReference type="OMA" id="CHLRCSN"/>
<dbReference type="OrthoDB" id="9894478at2759"/>
<dbReference type="PhylomeDB" id="O88472"/>
<dbReference type="TreeFam" id="TF337842"/>
<dbReference type="Reactome" id="R-MMU-5669034">
    <property type="pathway name" value="TNFs bind their physiological receptors"/>
</dbReference>
<dbReference type="BioGRID-ORCS" id="21935">
    <property type="hits" value="1 hit in 78 CRISPR screens"/>
</dbReference>
<dbReference type="PRO" id="PR:O88472"/>
<dbReference type="Proteomes" id="UP000000589">
    <property type="component" value="Chromosome 16"/>
</dbReference>
<dbReference type="RNAct" id="O88472">
    <property type="molecule type" value="protein"/>
</dbReference>
<dbReference type="Bgee" id="ENSMUSG00000022496">
    <property type="expression patterns" value="Expressed in embryonic cell in blastocyst and 20 other cell types or tissues"/>
</dbReference>
<dbReference type="GO" id="GO:0016020">
    <property type="term" value="C:membrane"/>
    <property type="evidence" value="ECO:0007669"/>
    <property type="project" value="UniProtKB-SubCell"/>
</dbReference>
<dbReference type="GO" id="GO:0038023">
    <property type="term" value="F:signaling receptor activity"/>
    <property type="evidence" value="ECO:0007669"/>
    <property type="project" value="InterPro"/>
</dbReference>
<dbReference type="GO" id="GO:0002250">
    <property type="term" value="P:adaptive immune response"/>
    <property type="evidence" value="ECO:0007669"/>
    <property type="project" value="UniProtKB-KW"/>
</dbReference>
<dbReference type="GO" id="GO:0002260">
    <property type="term" value="P:lymphocyte homeostasis"/>
    <property type="evidence" value="ECO:0000315"/>
    <property type="project" value="MGI"/>
</dbReference>
<dbReference type="GO" id="GO:0033209">
    <property type="term" value="P:tumor necrosis factor-mediated signaling pathway"/>
    <property type="evidence" value="ECO:0007669"/>
    <property type="project" value="InterPro"/>
</dbReference>
<dbReference type="CDD" id="cd13414">
    <property type="entry name" value="TNFRSF17"/>
    <property type="match status" value="1"/>
</dbReference>
<dbReference type="FunFam" id="4.10.1290.10:FF:000003">
    <property type="entry name" value="Tumor necrosis factor receptor superfamily member 17"/>
    <property type="match status" value="1"/>
</dbReference>
<dbReference type="Gene3D" id="4.10.1290.10">
    <property type="entry name" value="Tumor necrosis factor receptor superfamily"/>
    <property type="match status" value="1"/>
</dbReference>
<dbReference type="InterPro" id="IPR015337">
    <property type="entry name" value="BCMA_Tall-1-bd"/>
</dbReference>
<dbReference type="InterPro" id="IPR043521">
    <property type="entry name" value="TNFR_13C/17"/>
</dbReference>
<dbReference type="InterPro" id="IPR022320">
    <property type="entry name" value="TNFR_17"/>
</dbReference>
<dbReference type="PANTHER" id="PTHR20437">
    <property type="entry name" value="TUMOR NECROSIS FACTOR RECEPTOR SUBFAMILY MEMBER 13/17"/>
    <property type="match status" value="1"/>
</dbReference>
<dbReference type="PANTHER" id="PTHR20437:SF0">
    <property type="entry name" value="TUMOR NECROSIS FACTOR RECEPTOR SUPERFAMILY MEMBER 17"/>
    <property type="match status" value="1"/>
</dbReference>
<dbReference type="Pfam" id="PF09257">
    <property type="entry name" value="BCMA-Tall_bind"/>
    <property type="match status" value="1"/>
</dbReference>
<dbReference type="PIRSF" id="PIRSF011859">
    <property type="entry name" value="BCMA_Tall-1_bd"/>
    <property type="match status" value="1"/>
</dbReference>
<dbReference type="PRINTS" id="PR01967">
    <property type="entry name" value="TNFACTORR17"/>
</dbReference>
<dbReference type="SUPFAM" id="SSF57586">
    <property type="entry name" value="TNF receptor-like"/>
    <property type="match status" value="1"/>
</dbReference>